<gene>
    <name evidence="1" type="primary">serS</name>
    <name type="ordered locus">RoseRS_3466</name>
</gene>
<feature type="chain" id="PRO_1000019803" description="Serine--tRNA ligase">
    <location>
        <begin position="1"/>
        <end position="424"/>
    </location>
</feature>
<feature type="binding site" evidence="1">
    <location>
        <begin position="229"/>
        <end position="231"/>
    </location>
    <ligand>
        <name>L-serine</name>
        <dbReference type="ChEBI" id="CHEBI:33384"/>
    </ligand>
</feature>
<feature type="binding site" evidence="1">
    <location>
        <begin position="260"/>
        <end position="262"/>
    </location>
    <ligand>
        <name>ATP</name>
        <dbReference type="ChEBI" id="CHEBI:30616"/>
    </ligand>
</feature>
<feature type="binding site" evidence="1">
    <location>
        <position position="283"/>
    </location>
    <ligand>
        <name>L-serine</name>
        <dbReference type="ChEBI" id="CHEBI:33384"/>
    </ligand>
</feature>
<feature type="binding site" evidence="1">
    <location>
        <begin position="347"/>
        <end position="350"/>
    </location>
    <ligand>
        <name>ATP</name>
        <dbReference type="ChEBI" id="CHEBI:30616"/>
    </ligand>
</feature>
<feature type="binding site" evidence="1">
    <location>
        <position position="383"/>
    </location>
    <ligand>
        <name>L-serine</name>
        <dbReference type="ChEBI" id="CHEBI:33384"/>
    </ligand>
</feature>
<sequence length="424" mass="48180">MLDIRLIREQPDLVKASLGRTGVDPAQVDAVLAYDEQRRALLREVEQLKALRNAVSKEIGKMSDAAARDAKIAEMRAVGDRIAELDRELAAVEEQQYAALMELRNLPHPSVPDGPDETYNVVIAQEGEPRTFDFTPKPHWELGEALDIIDFERGVKLSGSRFYVLKGPGARLQRALIQWMLDLHGKQGYDEVYTPFVVKEQCMWGARQLPKFRDNLYRDVEDDLWLVPTAEVPVTNLHRDEILDADQLPLRYCAYTPCFRREKMSAGRDVRGIKRGHQFDKVEMYMFVRPETSYDELEKLRADAEETCRLLGLPFRTKELCTGDLGFAATRTYDIEVWAPGQGEWLEVSSCSNVEAFQARAANIRYRPEPGARPEYVHTLNGSGLGLPRTLIAILENYQQADGSVVIPEVLRPYMGGIEVIRRT</sequence>
<evidence type="ECO:0000255" key="1">
    <source>
        <dbReference type="HAMAP-Rule" id="MF_00176"/>
    </source>
</evidence>
<name>SYS_ROSS1</name>
<dbReference type="EC" id="6.1.1.11" evidence="1"/>
<dbReference type="EMBL" id="CP000686">
    <property type="protein sequence ID" value="ABQ91824.1"/>
    <property type="molecule type" value="Genomic_DNA"/>
</dbReference>
<dbReference type="RefSeq" id="WP_011958166.1">
    <property type="nucleotide sequence ID" value="NC_009523.1"/>
</dbReference>
<dbReference type="SMR" id="A5UYX1"/>
<dbReference type="STRING" id="357808.RoseRS_3466"/>
<dbReference type="KEGG" id="rrs:RoseRS_3466"/>
<dbReference type="eggNOG" id="COG0172">
    <property type="taxonomic scope" value="Bacteria"/>
</dbReference>
<dbReference type="HOGENOM" id="CLU_023797_1_1_0"/>
<dbReference type="OrthoDB" id="9804647at2"/>
<dbReference type="UniPathway" id="UPA00906">
    <property type="reaction ID" value="UER00895"/>
</dbReference>
<dbReference type="Proteomes" id="UP000006554">
    <property type="component" value="Chromosome"/>
</dbReference>
<dbReference type="GO" id="GO:0005737">
    <property type="term" value="C:cytoplasm"/>
    <property type="evidence" value="ECO:0007669"/>
    <property type="project" value="UniProtKB-SubCell"/>
</dbReference>
<dbReference type="GO" id="GO:0005524">
    <property type="term" value="F:ATP binding"/>
    <property type="evidence" value="ECO:0007669"/>
    <property type="project" value="UniProtKB-UniRule"/>
</dbReference>
<dbReference type="GO" id="GO:0004828">
    <property type="term" value="F:serine-tRNA ligase activity"/>
    <property type="evidence" value="ECO:0007669"/>
    <property type="project" value="UniProtKB-UniRule"/>
</dbReference>
<dbReference type="GO" id="GO:0016260">
    <property type="term" value="P:selenocysteine biosynthetic process"/>
    <property type="evidence" value="ECO:0007669"/>
    <property type="project" value="UniProtKB-UniRule"/>
</dbReference>
<dbReference type="GO" id="GO:0006434">
    <property type="term" value="P:seryl-tRNA aminoacylation"/>
    <property type="evidence" value="ECO:0007669"/>
    <property type="project" value="UniProtKB-UniRule"/>
</dbReference>
<dbReference type="CDD" id="cd00770">
    <property type="entry name" value="SerRS_core"/>
    <property type="match status" value="1"/>
</dbReference>
<dbReference type="Gene3D" id="3.30.930.10">
    <property type="entry name" value="Bira Bifunctional Protein, Domain 2"/>
    <property type="match status" value="1"/>
</dbReference>
<dbReference type="Gene3D" id="1.10.287.40">
    <property type="entry name" value="Serine-tRNA synthetase, tRNA binding domain"/>
    <property type="match status" value="1"/>
</dbReference>
<dbReference type="HAMAP" id="MF_00176">
    <property type="entry name" value="Ser_tRNA_synth_type1"/>
    <property type="match status" value="1"/>
</dbReference>
<dbReference type="InterPro" id="IPR002314">
    <property type="entry name" value="aa-tRNA-synt_IIb"/>
</dbReference>
<dbReference type="InterPro" id="IPR006195">
    <property type="entry name" value="aa-tRNA-synth_II"/>
</dbReference>
<dbReference type="InterPro" id="IPR045864">
    <property type="entry name" value="aa-tRNA-synth_II/BPL/LPL"/>
</dbReference>
<dbReference type="InterPro" id="IPR002317">
    <property type="entry name" value="Ser-tRNA-ligase_type_1"/>
</dbReference>
<dbReference type="InterPro" id="IPR015866">
    <property type="entry name" value="Ser-tRNA-synth_1_N"/>
</dbReference>
<dbReference type="InterPro" id="IPR042103">
    <property type="entry name" value="SerRS_1_N_sf"/>
</dbReference>
<dbReference type="InterPro" id="IPR033729">
    <property type="entry name" value="SerRS_core"/>
</dbReference>
<dbReference type="InterPro" id="IPR010978">
    <property type="entry name" value="tRNA-bd_arm"/>
</dbReference>
<dbReference type="NCBIfam" id="TIGR00414">
    <property type="entry name" value="serS"/>
    <property type="match status" value="1"/>
</dbReference>
<dbReference type="PANTHER" id="PTHR43697:SF1">
    <property type="entry name" value="SERINE--TRNA LIGASE"/>
    <property type="match status" value="1"/>
</dbReference>
<dbReference type="PANTHER" id="PTHR43697">
    <property type="entry name" value="SERYL-TRNA SYNTHETASE"/>
    <property type="match status" value="1"/>
</dbReference>
<dbReference type="Pfam" id="PF02403">
    <property type="entry name" value="Seryl_tRNA_N"/>
    <property type="match status" value="1"/>
</dbReference>
<dbReference type="Pfam" id="PF00587">
    <property type="entry name" value="tRNA-synt_2b"/>
    <property type="match status" value="1"/>
</dbReference>
<dbReference type="PIRSF" id="PIRSF001529">
    <property type="entry name" value="Ser-tRNA-synth_IIa"/>
    <property type="match status" value="1"/>
</dbReference>
<dbReference type="PRINTS" id="PR00981">
    <property type="entry name" value="TRNASYNTHSER"/>
</dbReference>
<dbReference type="SUPFAM" id="SSF55681">
    <property type="entry name" value="Class II aaRS and biotin synthetases"/>
    <property type="match status" value="1"/>
</dbReference>
<dbReference type="SUPFAM" id="SSF46589">
    <property type="entry name" value="tRNA-binding arm"/>
    <property type="match status" value="1"/>
</dbReference>
<dbReference type="PROSITE" id="PS50862">
    <property type="entry name" value="AA_TRNA_LIGASE_II"/>
    <property type="match status" value="1"/>
</dbReference>
<reference key="1">
    <citation type="submission" date="2007-04" db="EMBL/GenBank/DDBJ databases">
        <title>Complete sequence of Roseiflexus sp. RS-1.</title>
        <authorList>
            <consortium name="US DOE Joint Genome Institute"/>
            <person name="Copeland A."/>
            <person name="Lucas S."/>
            <person name="Lapidus A."/>
            <person name="Barry K."/>
            <person name="Detter J.C."/>
            <person name="Glavina del Rio T."/>
            <person name="Hammon N."/>
            <person name="Israni S."/>
            <person name="Dalin E."/>
            <person name="Tice H."/>
            <person name="Pitluck S."/>
            <person name="Chertkov O."/>
            <person name="Brettin T."/>
            <person name="Bruce D."/>
            <person name="Han C."/>
            <person name="Schmutz J."/>
            <person name="Larimer F."/>
            <person name="Land M."/>
            <person name="Hauser L."/>
            <person name="Kyrpides N."/>
            <person name="Mikhailova N."/>
            <person name="Bryant D.A."/>
            <person name="Richardson P."/>
        </authorList>
    </citation>
    <scope>NUCLEOTIDE SEQUENCE [LARGE SCALE GENOMIC DNA]</scope>
    <source>
        <strain>RS-1</strain>
    </source>
</reference>
<comment type="function">
    <text evidence="1">Catalyzes the attachment of serine to tRNA(Ser). Is also able to aminoacylate tRNA(Sec) with serine, to form the misacylated tRNA L-seryl-tRNA(Sec), which will be further converted into selenocysteinyl-tRNA(Sec).</text>
</comment>
<comment type="catalytic activity">
    <reaction evidence="1">
        <text>tRNA(Ser) + L-serine + ATP = L-seryl-tRNA(Ser) + AMP + diphosphate + H(+)</text>
        <dbReference type="Rhea" id="RHEA:12292"/>
        <dbReference type="Rhea" id="RHEA-COMP:9669"/>
        <dbReference type="Rhea" id="RHEA-COMP:9703"/>
        <dbReference type="ChEBI" id="CHEBI:15378"/>
        <dbReference type="ChEBI" id="CHEBI:30616"/>
        <dbReference type="ChEBI" id="CHEBI:33019"/>
        <dbReference type="ChEBI" id="CHEBI:33384"/>
        <dbReference type="ChEBI" id="CHEBI:78442"/>
        <dbReference type="ChEBI" id="CHEBI:78533"/>
        <dbReference type="ChEBI" id="CHEBI:456215"/>
        <dbReference type="EC" id="6.1.1.11"/>
    </reaction>
</comment>
<comment type="catalytic activity">
    <reaction evidence="1">
        <text>tRNA(Sec) + L-serine + ATP = L-seryl-tRNA(Sec) + AMP + diphosphate + H(+)</text>
        <dbReference type="Rhea" id="RHEA:42580"/>
        <dbReference type="Rhea" id="RHEA-COMP:9742"/>
        <dbReference type="Rhea" id="RHEA-COMP:10128"/>
        <dbReference type="ChEBI" id="CHEBI:15378"/>
        <dbReference type="ChEBI" id="CHEBI:30616"/>
        <dbReference type="ChEBI" id="CHEBI:33019"/>
        <dbReference type="ChEBI" id="CHEBI:33384"/>
        <dbReference type="ChEBI" id="CHEBI:78442"/>
        <dbReference type="ChEBI" id="CHEBI:78533"/>
        <dbReference type="ChEBI" id="CHEBI:456215"/>
        <dbReference type="EC" id="6.1.1.11"/>
    </reaction>
</comment>
<comment type="pathway">
    <text evidence="1">Aminoacyl-tRNA biosynthesis; selenocysteinyl-tRNA(Sec) biosynthesis; L-seryl-tRNA(Sec) from L-serine and tRNA(Sec): step 1/1.</text>
</comment>
<comment type="subunit">
    <text evidence="1">Homodimer. The tRNA molecule binds across the dimer.</text>
</comment>
<comment type="subcellular location">
    <subcellularLocation>
        <location evidence="1">Cytoplasm</location>
    </subcellularLocation>
</comment>
<comment type="domain">
    <text evidence="1">Consists of two distinct domains, a catalytic core and a N-terminal extension that is involved in tRNA binding.</text>
</comment>
<comment type="similarity">
    <text evidence="1">Belongs to the class-II aminoacyl-tRNA synthetase family. Type-1 seryl-tRNA synthetase subfamily.</text>
</comment>
<organism>
    <name type="scientific">Roseiflexus sp. (strain RS-1)</name>
    <dbReference type="NCBI Taxonomy" id="357808"/>
    <lineage>
        <taxon>Bacteria</taxon>
        <taxon>Bacillati</taxon>
        <taxon>Chloroflexota</taxon>
        <taxon>Chloroflexia</taxon>
        <taxon>Chloroflexales</taxon>
        <taxon>Roseiflexineae</taxon>
        <taxon>Roseiflexaceae</taxon>
        <taxon>Roseiflexus</taxon>
    </lineage>
</organism>
<accession>A5UYX1</accession>
<keyword id="KW-0030">Aminoacyl-tRNA synthetase</keyword>
<keyword id="KW-0067">ATP-binding</keyword>
<keyword id="KW-0963">Cytoplasm</keyword>
<keyword id="KW-0436">Ligase</keyword>
<keyword id="KW-0547">Nucleotide-binding</keyword>
<keyword id="KW-0648">Protein biosynthesis</keyword>
<protein>
    <recommendedName>
        <fullName evidence="1">Serine--tRNA ligase</fullName>
        <ecNumber evidence="1">6.1.1.11</ecNumber>
    </recommendedName>
    <alternativeName>
        <fullName evidence="1">Seryl-tRNA synthetase</fullName>
        <shortName evidence="1">SerRS</shortName>
    </alternativeName>
    <alternativeName>
        <fullName evidence="1">Seryl-tRNA(Ser/Sec) synthetase</fullName>
    </alternativeName>
</protein>
<proteinExistence type="inferred from homology"/>